<name>BGAL_ECOL6</name>
<organism>
    <name type="scientific">Escherichia coli O6:H1 (strain CFT073 / ATCC 700928 / UPEC)</name>
    <dbReference type="NCBI Taxonomy" id="199310"/>
    <lineage>
        <taxon>Bacteria</taxon>
        <taxon>Pseudomonadati</taxon>
        <taxon>Pseudomonadota</taxon>
        <taxon>Gammaproteobacteria</taxon>
        <taxon>Enterobacterales</taxon>
        <taxon>Enterobacteriaceae</taxon>
        <taxon>Escherichia</taxon>
    </lineage>
</organism>
<reference key="1">
    <citation type="journal article" date="2002" name="Proc. Natl. Acad. Sci. U.S.A.">
        <title>Extensive mosaic structure revealed by the complete genome sequence of uropathogenic Escherichia coli.</title>
        <authorList>
            <person name="Welch R.A."/>
            <person name="Burland V."/>
            <person name="Plunkett G. III"/>
            <person name="Redford P."/>
            <person name="Roesch P."/>
            <person name="Rasko D."/>
            <person name="Buckles E.L."/>
            <person name="Liou S.-R."/>
            <person name="Boutin A."/>
            <person name="Hackett J."/>
            <person name="Stroud D."/>
            <person name="Mayhew G.F."/>
            <person name="Rose D.J."/>
            <person name="Zhou S."/>
            <person name="Schwartz D.C."/>
            <person name="Perna N.T."/>
            <person name="Mobley H.L.T."/>
            <person name="Donnenberg M.S."/>
            <person name="Blattner F.R."/>
        </authorList>
    </citation>
    <scope>NUCLEOTIDE SEQUENCE [LARGE SCALE GENOMIC DNA]</scope>
    <source>
        <strain>CFT073 / ATCC 700928 / UPEC</strain>
    </source>
</reference>
<sequence>MTMITDSLAVVLQRRDWENPGVTQLNRLAAHPPFASWRNSEEARTDRPSQQLRSLNGEWRFAWFPAPEAVPESWLECDLPDADTVVVPSNWQMHGYDAPIYTNVTYPITVNPPFVPAENPTGCYSLTFNIDESWLQEGQTRIIFDGVNSAFHLWCNGRWVGYGQDSRLPSEFDLSAFLRAGENRLAVMVLRWSDGSYLEDQDMWRMSGIFRDVSLLHKPTTQISDFQVTTLFNDDFSRAVLEAEVQMYGELRDELRVTVSLWQGETQVASGTAPFGGEIIDERGGYADRVTLRLNVENPELWSAEIPNLYRAVVELHTADGTLIEAEACDVGFREVRIENGLLLLNGKPLLIRGVNRHEHHPLHGQVMDEQTMVQDILLMKQNNFNAVRCSHYPNHPLWYTLCDRYGLYVVDEANIETHGMVPMNRLTDDPRWLPAMSERVTRMVQRDRNHPSVIIWSLGNESGHGANHDALYRWIKSVDPSRPVQYEGGGADTTATDIICPMYARVDEDQPFPAVPKWSIKKWLSLPGEMRPLILCEYAHAMGNSLGGFAKYWQAFRQYPRLQGGFVWDWVDQSLIKYDENGNPWSAYGGDFGDTPNDRQFCMNGLVFADRTPHPALTEAKHQQQYFQFRLSGRTIEVTSEYLFRHSDNEFLHWMVALDGKPLASGEVPLDVGPQGKQLIELPELPQPESAGQLWLTVRVVQPNATAWSEAGHISAWQQWRLAENLSVTLPSASHAIPQLTTSGTDFCIELGNKRWQFNRQSGFLSQMWIGDEKQLLTPLRDQFTRAPLDNDIGVSEATRIDPNAWVERWKAAGHYQAEAALLQCTADTLADAVLITTAHAWQHQGKTLFISRKTYRIDGHGEMVINVDVAVASDTPHPARIGLTCQLAQVSERVNWLGLGPQENYPDRLTAACFDRWDLPLSDMYTPYVFPSENGLRCGTRELNYGPHQWRGDFQFNISRYSQQQLMETSHRHLLHAEEGTWLNIDGFHMGIGGDDSWSPSVSAEFQLSAGRYHYQLVWCQK</sequence>
<gene>
    <name evidence="1" type="primary">lacZ</name>
    <name type="ordered locus">c0459</name>
</gene>
<proteinExistence type="inferred from homology"/>
<comment type="catalytic activity">
    <reaction evidence="1">
        <text>Hydrolysis of terminal non-reducing beta-D-galactose residues in beta-D-galactosides.</text>
        <dbReference type="EC" id="3.2.1.23"/>
    </reaction>
</comment>
<comment type="cofactor">
    <cofactor evidence="1">
        <name>Mg(2+)</name>
        <dbReference type="ChEBI" id="CHEBI:18420"/>
    </cofactor>
    <text evidence="1">Binds 2 magnesium ions per monomer.</text>
</comment>
<comment type="cofactor">
    <cofactor evidence="1">
        <name>Na(+)</name>
        <dbReference type="ChEBI" id="CHEBI:29101"/>
    </cofactor>
    <text evidence="1">Binds 1 sodium ion per monomer.</text>
</comment>
<comment type="subunit">
    <text evidence="1">Homotetramer.</text>
</comment>
<comment type="similarity">
    <text evidence="1">Belongs to the glycosyl hydrolase 2 family.</text>
</comment>
<feature type="chain" id="PRO_0000366996" description="Beta-galactosidase">
    <location>
        <begin position="1"/>
        <end position="1024"/>
    </location>
</feature>
<feature type="active site" description="Proton donor" evidence="1">
    <location>
        <position position="462"/>
    </location>
</feature>
<feature type="active site" description="Nucleophile" evidence="1">
    <location>
        <position position="538"/>
    </location>
</feature>
<feature type="binding site" evidence="1">
    <location>
        <position position="103"/>
    </location>
    <ligand>
        <name>substrate</name>
    </ligand>
</feature>
<feature type="binding site" evidence="1">
    <location>
        <position position="202"/>
    </location>
    <ligand>
        <name>Na(+)</name>
        <dbReference type="ChEBI" id="CHEBI:29101"/>
    </ligand>
</feature>
<feature type="binding site" evidence="1">
    <location>
        <position position="202"/>
    </location>
    <ligand>
        <name>substrate</name>
    </ligand>
</feature>
<feature type="binding site" evidence="1">
    <location>
        <position position="417"/>
    </location>
    <ligand>
        <name>Mg(2+)</name>
        <dbReference type="ChEBI" id="CHEBI:18420"/>
        <label>1</label>
    </ligand>
</feature>
<feature type="binding site" evidence="1">
    <location>
        <position position="419"/>
    </location>
    <ligand>
        <name>Mg(2+)</name>
        <dbReference type="ChEBI" id="CHEBI:18420"/>
        <label>1</label>
    </ligand>
</feature>
<feature type="binding site" evidence="1">
    <location>
        <position position="462"/>
    </location>
    <ligand>
        <name>Mg(2+)</name>
        <dbReference type="ChEBI" id="CHEBI:18420"/>
        <label>1</label>
    </ligand>
</feature>
<feature type="binding site" evidence="1">
    <location>
        <position position="462"/>
    </location>
    <ligand>
        <name>substrate</name>
    </ligand>
</feature>
<feature type="binding site" evidence="1">
    <location>
        <begin position="538"/>
        <end position="541"/>
    </location>
    <ligand>
        <name>substrate</name>
    </ligand>
</feature>
<feature type="binding site" evidence="1">
    <location>
        <position position="598"/>
    </location>
    <ligand>
        <name>Mg(2+)</name>
        <dbReference type="ChEBI" id="CHEBI:18420"/>
        <label>2</label>
    </ligand>
</feature>
<feature type="binding site" evidence="1">
    <location>
        <position position="602"/>
    </location>
    <ligand>
        <name>Na(+)</name>
        <dbReference type="ChEBI" id="CHEBI:29101"/>
    </ligand>
</feature>
<feature type="binding site" evidence="1">
    <location>
        <position position="605"/>
    </location>
    <ligand>
        <name>Na(+)</name>
        <dbReference type="ChEBI" id="CHEBI:29101"/>
    </ligand>
</feature>
<feature type="binding site" evidence="1">
    <location>
        <position position="605"/>
    </location>
    <ligand>
        <name>substrate</name>
    </ligand>
</feature>
<feature type="binding site" evidence="1">
    <location>
        <position position="1000"/>
    </location>
    <ligand>
        <name>substrate</name>
    </ligand>
</feature>
<feature type="site" description="Transition state stabilizer" evidence="1">
    <location>
        <position position="358"/>
    </location>
</feature>
<feature type="site" description="Transition state stabilizer" evidence="1">
    <location>
        <position position="392"/>
    </location>
</feature>
<evidence type="ECO:0000255" key="1">
    <source>
        <dbReference type="HAMAP-Rule" id="MF_01687"/>
    </source>
</evidence>
<accession>Q8FKG6</accession>
<keyword id="KW-0326">Glycosidase</keyword>
<keyword id="KW-0378">Hydrolase</keyword>
<keyword id="KW-0460">Magnesium</keyword>
<keyword id="KW-0479">Metal-binding</keyword>
<keyword id="KW-1185">Reference proteome</keyword>
<keyword id="KW-0915">Sodium</keyword>
<protein>
    <recommendedName>
        <fullName evidence="1">Beta-galactosidase</fullName>
        <shortName evidence="1">Beta-gal</shortName>
        <ecNumber evidence="1">3.2.1.23</ecNumber>
    </recommendedName>
    <alternativeName>
        <fullName evidence="1">Lactase</fullName>
    </alternativeName>
</protein>
<dbReference type="EC" id="3.2.1.23" evidence="1"/>
<dbReference type="EMBL" id="AE014075">
    <property type="protein sequence ID" value="AAN78938.1"/>
    <property type="molecule type" value="Genomic_DNA"/>
</dbReference>
<dbReference type="RefSeq" id="WP_000177874.1">
    <property type="nucleotide sequence ID" value="NZ_CP051263.1"/>
</dbReference>
<dbReference type="SMR" id="Q8FKG6"/>
<dbReference type="STRING" id="199310.c0459"/>
<dbReference type="CAZy" id="GH2">
    <property type="family name" value="Glycoside Hydrolase Family 2"/>
</dbReference>
<dbReference type="KEGG" id="ecc:c0459"/>
<dbReference type="eggNOG" id="COG3250">
    <property type="taxonomic scope" value="Bacteria"/>
</dbReference>
<dbReference type="HOGENOM" id="CLU_002346_0_2_6"/>
<dbReference type="BioCyc" id="ECOL199310:C0459-MONOMER"/>
<dbReference type="Proteomes" id="UP000001410">
    <property type="component" value="Chromosome"/>
</dbReference>
<dbReference type="GO" id="GO:0009341">
    <property type="term" value="C:beta-galactosidase complex"/>
    <property type="evidence" value="ECO:0007669"/>
    <property type="project" value="InterPro"/>
</dbReference>
<dbReference type="GO" id="GO:0004565">
    <property type="term" value="F:beta-galactosidase activity"/>
    <property type="evidence" value="ECO:0007669"/>
    <property type="project" value="UniProtKB-EC"/>
</dbReference>
<dbReference type="GO" id="GO:0030246">
    <property type="term" value="F:carbohydrate binding"/>
    <property type="evidence" value="ECO:0007669"/>
    <property type="project" value="InterPro"/>
</dbReference>
<dbReference type="GO" id="GO:0000287">
    <property type="term" value="F:magnesium ion binding"/>
    <property type="evidence" value="ECO:0007669"/>
    <property type="project" value="UniProtKB-UniRule"/>
</dbReference>
<dbReference type="GO" id="GO:0005990">
    <property type="term" value="P:lactose catabolic process"/>
    <property type="evidence" value="ECO:0007669"/>
    <property type="project" value="TreeGrafter"/>
</dbReference>
<dbReference type="FunFam" id="2.60.120.260:FF:000058">
    <property type="entry name" value="Beta-galactosidase"/>
    <property type="match status" value="1"/>
</dbReference>
<dbReference type="FunFam" id="2.60.40.10:FF:000680">
    <property type="entry name" value="Beta-galactosidase"/>
    <property type="match status" value="1"/>
</dbReference>
<dbReference type="FunFam" id="2.60.40.10:FF:000850">
    <property type="entry name" value="Beta-galactosidase"/>
    <property type="match status" value="1"/>
</dbReference>
<dbReference type="FunFam" id="2.70.98.10:FF:000006">
    <property type="entry name" value="Beta-galactosidase"/>
    <property type="match status" value="1"/>
</dbReference>
<dbReference type="FunFam" id="3.20.20.80:FF:000018">
    <property type="entry name" value="Beta-galactosidase"/>
    <property type="match status" value="1"/>
</dbReference>
<dbReference type="Gene3D" id="2.70.98.10">
    <property type="match status" value="1"/>
</dbReference>
<dbReference type="Gene3D" id="2.60.120.260">
    <property type="entry name" value="Galactose-binding domain-like"/>
    <property type="match status" value="1"/>
</dbReference>
<dbReference type="Gene3D" id="3.20.20.80">
    <property type="entry name" value="Glycosidases"/>
    <property type="match status" value="1"/>
</dbReference>
<dbReference type="Gene3D" id="2.60.40.10">
    <property type="entry name" value="Immunoglobulins"/>
    <property type="match status" value="2"/>
</dbReference>
<dbReference type="HAMAP" id="MF_01687">
    <property type="entry name" value="Beta_gal"/>
    <property type="match status" value="1"/>
</dbReference>
<dbReference type="InterPro" id="IPR004199">
    <property type="entry name" value="B-gal_small/dom_5"/>
</dbReference>
<dbReference type="InterPro" id="IPR050347">
    <property type="entry name" value="Bact_Beta-galactosidase"/>
</dbReference>
<dbReference type="InterPro" id="IPR036156">
    <property type="entry name" value="Beta-gal/glucu_dom_sf"/>
</dbReference>
<dbReference type="InterPro" id="IPR011013">
    <property type="entry name" value="Gal_mutarotase_sf_dom"/>
</dbReference>
<dbReference type="InterPro" id="IPR008979">
    <property type="entry name" value="Galactose-bd-like_sf"/>
</dbReference>
<dbReference type="InterPro" id="IPR014718">
    <property type="entry name" value="GH-type_carb-bd"/>
</dbReference>
<dbReference type="InterPro" id="IPR006101">
    <property type="entry name" value="Glyco_hydro_2"/>
</dbReference>
<dbReference type="InterPro" id="IPR023232">
    <property type="entry name" value="Glyco_hydro_2_AS"/>
</dbReference>
<dbReference type="InterPro" id="IPR023933">
    <property type="entry name" value="Glyco_hydro_2_beta_Galsidase"/>
</dbReference>
<dbReference type="InterPro" id="IPR006103">
    <property type="entry name" value="Glyco_hydro_2_cat"/>
</dbReference>
<dbReference type="InterPro" id="IPR023230">
    <property type="entry name" value="Glyco_hydro_2_CS"/>
</dbReference>
<dbReference type="InterPro" id="IPR006102">
    <property type="entry name" value="Glyco_hydro_2_Ig-like"/>
</dbReference>
<dbReference type="InterPro" id="IPR006104">
    <property type="entry name" value="Glyco_hydro_2_N"/>
</dbReference>
<dbReference type="InterPro" id="IPR017853">
    <property type="entry name" value="Glycoside_hydrolase_SF"/>
</dbReference>
<dbReference type="InterPro" id="IPR013783">
    <property type="entry name" value="Ig-like_fold"/>
</dbReference>
<dbReference type="InterPro" id="IPR032312">
    <property type="entry name" value="LacZ_4"/>
</dbReference>
<dbReference type="NCBIfam" id="NF007074">
    <property type="entry name" value="PRK09525.1"/>
    <property type="match status" value="1"/>
</dbReference>
<dbReference type="PANTHER" id="PTHR46323">
    <property type="entry name" value="BETA-GALACTOSIDASE"/>
    <property type="match status" value="1"/>
</dbReference>
<dbReference type="PANTHER" id="PTHR46323:SF2">
    <property type="entry name" value="BETA-GALACTOSIDASE"/>
    <property type="match status" value="1"/>
</dbReference>
<dbReference type="Pfam" id="PF02929">
    <property type="entry name" value="Bgal_small_N"/>
    <property type="match status" value="1"/>
</dbReference>
<dbReference type="Pfam" id="PF00703">
    <property type="entry name" value="Glyco_hydro_2"/>
    <property type="match status" value="1"/>
</dbReference>
<dbReference type="Pfam" id="PF02836">
    <property type="entry name" value="Glyco_hydro_2_C"/>
    <property type="match status" value="1"/>
</dbReference>
<dbReference type="Pfam" id="PF02837">
    <property type="entry name" value="Glyco_hydro_2_N"/>
    <property type="match status" value="1"/>
</dbReference>
<dbReference type="Pfam" id="PF16353">
    <property type="entry name" value="LacZ_4"/>
    <property type="match status" value="1"/>
</dbReference>
<dbReference type="PRINTS" id="PR00132">
    <property type="entry name" value="GLHYDRLASE2"/>
</dbReference>
<dbReference type="SMART" id="SM01038">
    <property type="entry name" value="Bgal_small_N"/>
    <property type="match status" value="1"/>
</dbReference>
<dbReference type="SUPFAM" id="SSF51445">
    <property type="entry name" value="(Trans)glycosidases"/>
    <property type="match status" value="1"/>
</dbReference>
<dbReference type="SUPFAM" id="SSF49303">
    <property type="entry name" value="beta-Galactosidase/glucuronidase domain"/>
    <property type="match status" value="2"/>
</dbReference>
<dbReference type="SUPFAM" id="SSF74650">
    <property type="entry name" value="Galactose mutarotase-like"/>
    <property type="match status" value="1"/>
</dbReference>
<dbReference type="SUPFAM" id="SSF49785">
    <property type="entry name" value="Galactose-binding domain-like"/>
    <property type="match status" value="1"/>
</dbReference>
<dbReference type="PROSITE" id="PS00719">
    <property type="entry name" value="GLYCOSYL_HYDROL_F2_1"/>
    <property type="match status" value="1"/>
</dbReference>
<dbReference type="PROSITE" id="PS00608">
    <property type="entry name" value="GLYCOSYL_HYDROL_F2_2"/>
    <property type="match status" value="1"/>
</dbReference>